<proteinExistence type="inferred from homology"/>
<reference key="1">
    <citation type="journal article" date="2004" name="Nat. Biotechnol.">
        <title>The genome sequence of the anaerobic, sulfate-reducing bacterium Desulfovibrio vulgaris Hildenborough.</title>
        <authorList>
            <person name="Heidelberg J.F."/>
            <person name="Seshadri R."/>
            <person name="Haveman S.A."/>
            <person name="Hemme C.L."/>
            <person name="Paulsen I.T."/>
            <person name="Kolonay J.F."/>
            <person name="Eisen J.A."/>
            <person name="Ward N.L."/>
            <person name="Methe B.A."/>
            <person name="Brinkac L.M."/>
            <person name="Daugherty S.C."/>
            <person name="DeBoy R.T."/>
            <person name="Dodson R.J."/>
            <person name="Durkin A.S."/>
            <person name="Madupu R."/>
            <person name="Nelson W.C."/>
            <person name="Sullivan S.A."/>
            <person name="Fouts D.E."/>
            <person name="Haft D.H."/>
            <person name="Selengut J."/>
            <person name="Peterson J.D."/>
            <person name="Davidsen T.M."/>
            <person name="Zafar N."/>
            <person name="Zhou L."/>
            <person name="Radune D."/>
            <person name="Dimitrov G."/>
            <person name="Hance M."/>
            <person name="Tran K."/>
            <person name="Khouri H.M."/>
            <person name="Gill J."/>
            <person name="Utterback T.R."/>
            <person name="Feldblyum T.V."/>
            <person name="Wall J.D."/>
            <person name="Voordouw G."/>
            <person name="Fraser C.M."/>
        </authorList>
    </citation>
    <scope>NUCLEOTIDE SEQUENCE [LARGE SCALE GENOMIC DNA]</scope>
    <source>
        <strain>ATCC 29579 / DSM 644 / CCUG 34227 / NCIMB 8303 / VKM B-1760 / Hildenborough</strain>
    </source>
</reference>
<name>RF1_NITV2</name>
<protein>
    <recommendedName>
        <fullName evidence="1">Peptide chain release factor 1</fullName>
        <shortName evidence="1">RF-1</shortName>
    </recommendedName>
</protein>
<gene>
    <name evidence="1" type="primary">prfA</name>
    <name type="ordered locus">DVU_2914</name>
</gene>
<keyword id="KW-0963">Cytoplasm</keyword>
<keyword id="KW-0488">Methylation</keyword>
<keyword id="KW-0648">Protein biosynthesis</keyword>
<keyword id="KW-1185">Reference proteome</keyword>
<evidence type="ECO:0000255" key="1">
    <source>
        <dbReference type="HAMAP-Rule" id="MF_00093"/>
    </source>
</evidence>
<accession>Q727E1</accession>
<dbReference type="EMBL" id="AE017285">
    <property type="protein sequence ID" value="AAS97386.1"/>
    <property type="molecule type" value="Genomic_DNA"/>
</dbReference>
<dbReference type="RefSeq" id="WP_010940174.1">
    <property type="nucleotide sequence ID" value="NC_002937.3"/>
</dbReference>
<dbReference type="RefSeq" id="YP_012126.1">
    <property type="nucleotide sequence ID" value="NC_002937.3"/>
</dbReference>
<dbReference type="SMR" id="Q727E1"/>
<dbReference type="STRING" id="882.DVU_2914"/>
<dbReference type="PaxDb" id="882-DVU_2914"/>
<dbReference type="EnsemblBacteria" id="AAS97386">
    <property type="protein sequence ID" value="AAS97386"/>
    <property type="gene ID" value="DVU_2914"/>
</dbReference>
<dbReference type="KEGG" id="dvu:DVU_2914"/>
<dbReference type="PATRIC" id="fig|882.5.peg.2636"/>
<dbReference type="eggNOG" id="COG0216">
    <property type="taxonomic scope" value="Bacteria"/>
</dbReference>
<dbReference type="HOGENOM" id="CLU_036856_0_1_7"/>
<dbReference type="OrthoDB" id="9806673at2"/>
<dbReference type="PhylomeDB" id="Q727E1"/>
<dbReference type="Proteomes" id="UP000002194">
    <property type="component" value="Chromosome"/>
</dbReference>
<dbReference type="GO" id="GO:0005737">
    <property type="term" value="C:cytoplasm"/>
    <property type="evidence" value="ECO:0007669"/>
    <property type="project" value="UniProtKB-SubCell"/>
</dbReference>
<dbReference type="GO" id="GO:0016149">
    <property type="term" value="F:translation release factor activity, codon specific"/>
    <property type="evidence" value="ECO:0007669"/>
    <property type="project" value="UniProtKB-UniRule"/>
</dbReference>
<dbReference type="FunFam" id="3.30.160.20:FF:000004">
    <property type="entry name" value="Peptide chain release factor 1"/>
    <property type="match status" value="1"/>
</dbReference>
<dbReference type="FunFam" id="3.30.70.1660:FF:000002">
    <property type="entry name" value="Peptide chain release factor 1"/>
    <property type="match status" value="1"/>
</dbReference>
<dbReference type="FunFam" id="3.30.70.1660:FF:000004">
    <property type="entry name" value="Peptide chain release factor 1"/>
    <property type="match status" value="1"/>
</dbReference>
<dbReference type="Gene3D" id="3.30.160.20">
    <property type="match status" value="1"/>
</dbReference>
<dbReference type="Gene3D" id="3.30.70.1660">
    <property type="match status" value="1"/>
</dbReference>
<dbReference type="Gene3D" id="6.10.140.1950">
    <property type="match status" value="1"/>
</dbReference>
<dbReference type="HAMAP" id="MF_00093">
    <property type="entry name" value="Rel_fac_1"/>
    <property type="match status" value="1"/>
</dbReference>
<dbReference type="InterPro" id="IPR005139">
    <property type="entry name" value="PCRF"/>
</dbReference>
<dbReference type="InterPro" id="IPR000352">
    <property type="entry name" value="Pep_chain_release_fac_I"/>
</dbReference>
<dbReference type="InterPro" id="IPR045853">
    <property type="entry name" value="Pep_chain_release_fac_I_sf"/>
</dbReference>
<dbReference type="InterPro" id="IPR050057">
    <property type="entry name" value="Prokaryotic/Mito_RF"/>
</dbReference>
<dbReference type="InterPro" id="IPR004373">
    <property type="entry name" value="RF-1"/>
</dbReference>
<dbReference type="NCBIfam" id="TIGR00019">
    <property type="entry name" value="prfA"/>
    <property type="match status" value="1"/>
</dbReference>
<dbReference type="NCBIfam" id="NF001859">
    <property type="entry name" value="PRK00591.1"/>
    <property type="match status" value="1"/>
</dbReference>
<dbReference type="PANTHER" id="PTHR43804">
    <property type="entry name" value="LD18447P"/>
    <property type="match status" value="1"/>
</dbReference>
<dbReference type="PANTHER" id="PTHR43804:SF7">
    <property type="entry name" value="LD18447P"/>
    <property type="match status" value="1"/>
</dbReference>
<dbReference type="Pfam" id="PF03462">
    <property type="entry name" value="PCRF"/>
    <property type="match status" value="1"/>
</dbReference>
<dbReference type="Pfam" id="PF00472">
    <property type="entry name" value="RF-1"/>
    <property type="match status" value="1"/>
</dbReference>
<dbReference type="SMART" id="SM00937">
    <property type="entry name" value="PCRF"/>
    <property type="match status" value="1"/>
</dbReference>
<dbReference type="SUPFAM" id="SSF75620">
    <property type="entry name" value="Release factor"/>
    <property type="match status" value="1"/>
</dbReference>
<dbReference type="PROSITE" id="PS00745">
    <property type="entry name" value="RF_PROK_I"/>
    <property type="match status" value="1"/>
</dbReference>
<sequence length="357" mass="39977">MFAKLENLELKFEDLEQQLSSAEVFNDQDRYRKLTKAHADLKQVVDAFRRYKEMKQNLADNKELLGDSDHEIRAMAHEEIKAIEAALPDIEQELKILLLPRDPMDDKNILLEIRAGTGGEEASLFAADLFRMYTRYAEIMGWKVEVLSASDSDTGGYKEIIALIAGDKVYSRLKYESGTHRVQRVPATEAQGRIHTSAATVAVMPEAEEVDVDIRPDDLRIDVYRASGAGGQHVNKTESAVRITHLPTGIVVACQDEKSQHKNKAKAMKVLISRVLQAEQERAHSVIADARRALVGSGDRSERIRTYNYPQSRITDHRINLTLYSLDKVMEGELAPLVDALVTHAQTEALKAQADAS</sequence>
<feature type="chain" id="PRO_0000177667" description="Peptide chain release factor 1">
    <location>
        <begin position="1"/>
        <end position="357"/>
    </location>
</feature>
<feature type="modified residue" description="N5-methylglutamine" evidence="1">
    <location>
        <position position="232"/>
    </location>
</feature>
<organism>
    <name type="scientific">Nitratidesulfovibrio vulgaris (strain ATCC 29579 / DSM 644 / CCUG 34227 / NCIMB 8303 / VKM B-1760 / Hildenborough)</name>
    <name type="common">Desulfovibrio vulgaris</name>
    <dbReference type="NCBI Taxonomy" id="882"/>
    <lineage>
        <taxon>Bacteria</taxon>
        <taxon>Pseudomonadati</taxon>
        <taxon>Thermodesulfobacteriota</taxon>
        <taxon>Desulfovibrionia</taxon>
        <taxon>Desulfovibrionales</taxon>
        <taxon>Desulfovibrionaceae</taxon>
        <taxon>Nitratidesulfovibrio</taxon>
    </lineage>
</organism>
<comment type="function">
    <text evidence="1">Peptide chain release factor 1 directs the termination of translation in response to the peptide chain termination codons UAG and UAA.</text>
</comment>
<comment type="subcellular location">
    <subcellularLocation>
        <location evidence="1">Cytoplasm</location>
    </subcellularLocation>
</comment>
<comment type="PTM">
    <text evidence="1">Methylated by PrmC. Methylation increases the termination efficiency of RF1.</text>
</comment>
<comment type="similarity">
    <text evidence="1">Belongs to the prokaryotic/mitochondrial release factor family.</text>
</comment>